<proteinExistence type="inferred from homology"/>
<keyword id="KW-0963">Cytoplasm</keyword>
<keyword id="KW-0275">Fatty acid biosynthesis</keyword>
<keyword id="KW-0276">Fatty acid metabolism</keyword>
<keyword id="KW-0444">Lipid biosynthesis</keyword>
<keyword id="KW-0443">Lipid metabolism</keyword>
<keyword id="KW-0596">Phosphopantetheine</keyword>
<keyword id="KW-0597">Phosphoprotein</keyword>
<keyword id="KW-1185">Reference proteome</keyword>
<accession>A5EXE0</accession>
<dbReference type="EMBL" id="CP000513">
    <property type="protein sequence ID" value="ABQ14062.1"/>
    <property type="molecule type" value="Genomic_DNA"/>
</dbReference>
<dbReference type="RefSeq" id="WP_012031513.1">
    <property type="nucleotide sequence ID" value="NC_009446.1"/>
</dbReference>
<dbReference type="SMR" id="A5EXE0"/>
<dbReference type="STRING" id="246195.DNO_1210"/>
<dbReference type="KEGG" id="dno:DNO_1210"/>
<dbReference type="eggNOG" id="COG0236">
    <property type="taxonomic scope" value="Bacteria"/>
</dbReference>
<dbReference type="HOGENOM" id="CLU_108696_5_1_6"/>
<dbReference type="OrthoDB" id="9804551at2"/>
<dbReference type="UniPathway" id="UPA00094"/>
<dbReference type="Proteomes" id="UP000000248">
    <property type="component" value="Chromosome"/>
</dbReference>
<dbReference type="GO" id="GO:0005829">
    <property type="term" value="C:cytosol"/>
    <property type="evidence" value="ECO:0007669"/>
    <property type="project" value="TreeGrafter"/>
</dbReference>
<dbReference type="GO" id="GO:0016020">
    <property type="term" value="C:membrane"/>
    <property type="evidence" value="ECO:0007669"/>
    <property type="project" value="GOC"/>
</dbReference>
<dbReference type="GO" id="GO:0000035">
    <property type="term" value="F:acyl binding"/>
    <property type="evidence" value="ECO:0007669"/>
    <property type="project" value="TreeGrafter"/>
</dbReference>
<dbReference type="GO" id="GO:0000036">
    <property type="term" value="F:acyl carrier activity"/>
    <property type="evidence" value="ECO:0007669"/>
    <property type="project" value="UniProtKB-UniRule"/>
</dbReference>
<dbReference type="GO" id="GO:0009245">
    <property type="term" value="P:lipid A biosynthetic process"/>
    <property type="evidence" value="ECO:0007669"/>
    <property type="project" value="TreeGrafter"/>
</dbReference>
<dbReference type="FunFam" id="1.10.1200.10:FF:000001">
    <property type="entry name" value="Acyl carrier protein"/>
    <property type="match status" value="1"/>
</dbReference>
<dbReference type="Gene3D" id="1.10.1200.10">
    <property type="entry name" value="ACP-like"/>
    <property type="match status" value="1"/>
</dbReference>
<dbReference type="HAMAP" id="MF_01217">
    <property type="entry name" value="Acyl_carrier"/>
    <property type="match status" value="1"/>
</dbReference>
<dbReference type="InterPro" id="IPR003231">
    <property type="entry name" value="ACP"/>
</dbReference>
<dbReference type="InterPro" id="IPR036736">
    <property type="entry name" value="ACP-like_sf"/>
</dbReference>
<dbReference type="InterPro" id="IPR009081">
    <property type="entry name" value="PP-bd_ACP"/>
</dbReference>
<dbReference type="InterPro" id="IPR006162">
    <property type="entry name" value="Ppantetheine_attach_site"/>
</dbReference>
<dbReference type="NCBIfam" id="TIGR00517">
    <property type="entry name" value="acyl_carrier"/>
    <property type="match status" value="1"/>
</dbReference>
<dbReference type="NCBIfam" id="NF002148">
    <property type="entry name" value="PRK00982.1-2"/>
    <property type="match status" value="1"/>
</dbReference>
<dbReference type="NCBIfam" id="NF002149">
    <property type="entry name" value="PRK00982.1-3"/>
    <property type="match status" value="1"/>
</dbReference>
<dbReference type="NCBIfam" id="NF002150">
    <property type="entry name" value="PRK00982.1-4"/>
    <property type="match status" value="1"/>
</dbReference>
<dbReference type="NCBIfam" id="NF002151">
    <property type="entry name" value="PRK00982.1-5"/>
    <property type="match status" value="1"/>
</dbReference>
<dbReference type="PANTHER" id="PTHR20863">
    <property type="entry name" value="ACYL CARRIER PROTEIN"/>
    <property type="match status" value="1"/>
</dbReference>
<dbReference type="PANTHER" id="PTHR20863:SF76">
    <property type="entry name" value="CARRIER DOMAIN-CONTAINING PROTEIN"/>
    <property type="match status" value="1"/>
</dbReference>
<dbReference type="Pfam" id="PF00550">
    <property type="entry name" value="PP-binding"/>
    <property type="match status" value="1"/>
</dbReference>
<dbReference type="SUPFAM" id="SSF47336">
    <property type="entry name" value="ACP-like"/>
    <property type="match status" value="1"/>
</dbReference>
<dbReference type="PROSITE" id="PS50075">
    <property type="entry name" value="CARRIER"/>
    <property type="match status" value="1"/>
</dbReference>
<dbReference type="PROSITE" id="PS00012">
    <property type="entry name" value="PHOSPHOPANTETHEINE"/>
    <property type="match status" value="1"/>
</dbReference>
<sequence>MSNIEERVIKVIAEQLNVDEGQVKADAHFIDDLGADSLDLVELVMTLEKEFDCEIPDEEAEKITTVQSAIDFVKSR</sequence>
<reference key="1">
    <citation type="journal article" date="2007" name="Nat. Biotechnol.">
        <title>Genome sequence and identification of candidate vaccine antigens from the animal pathogen Dichelobacter nodosus.</title>
        <authorList>
            <person name="Myers G.S.A."/>
            <person name="Parker D."/>
            <person name="Al-Hasani K."/>
            <person name="Kennan R.M."/>
            <person name="Seemann T."/>
            <person name="Ren Q."/>
            <person name="Badger J.H."/>
            <person name="Selengut J.D."/>
            <person name="Deboy R.T."/>
            <person name="Tettelin H."/>
            <person name="Boyce J.D."/>
            <person name="McCarl V.P."/>
            <person name="Han X."/>
            <person name="Nelson W.C."/>
            <person name="Madupu R."/>
            <person name="Mohamoud Y."/>
            <person name="Holley T."/>
            <person name="Fedorova N."/>
            <person name="Khouri H."/>
            <person name="Bottomley S.P."/>
            <person name="Whittington R.J."/>
            <person name="Adler B."/>
            <person name="Songer J.G."/>
            <person name="Rood J.I."/>
            <person name="Paulsen I.T."/>
        </authorList>
    </citation>
    <scope>NUCLEOTIDE SEQUENCE [LARGE SCALE GENOMIC DNA]</scope>
    <source>
        <strain>VCS1703A</strain>
    </source>
</reference>
<comment type="function">
    <text evidence="1">Carrier of the growing fatty acid chain in fatty acid biosynthesis.</text>
</comment>
<comment type="pathway">
    <text evidence="1">Lipid metabolism; fatty acid biosynthesis.</text>
</comment>
<comment type="subcellular location">
    <subcellularLocation>
        <location evidence="1">Cytoplasm</location>
    </subcellularLocation>
</comment>
<comment type="PTM">
    <text evidence="1">4'-phosphopantetheine is transferred from CoA to a specific serine of apo-ACP by AcpS. This modification is essential for activity because fatty acids are bound in thioester linkage to the sulfhydryl of the prosthetic group.</text>
</comment>
<comment type="similarity">
    <text evidence="1">Belongs to the acyl carrier protein (ACP) family.</text>
</comment>
<feature type="chain" id="PRO_1000066604" description="Acyl carrier protein">
    <location>
        <begin position="1"/>
        <end position="76"/>
    </location>
</feature>
<feature type="domain" description="Carrier" evidence="2">
    <location>
        <begin position="2"/>
        <end position="76"/>
    </location>
</feature>
<feature type="modified residue" description="O-(pantetheine 4'-phosphoryl)serine" evidence="2">
    <location>
        <position position="37"/>
    </location>
</feature>
<organism>
    <name type="scientific">Dichelobacter nodosus (strain VCS1703A)</name>
    <dbReference type="NCBI Taxonomy" id="246195"/>
    <lineage>
        <taxon>Bacteria</taxon>
        <taxon>Pseudomonadati</taxon>
        <taxon>Pseudomonadota</taxon>
        <taxon>Gammaproteobacteria</taxon>
        <taxon>Cardiobacteriales</taxon>
        <taxon>Cardiobacteriaceae</taxon>
        <taxon>Dichelobacter</taxon>
    </lineage>
</organism>
<evidence type="ECO:0000255" key="1">
    <source>
        <dbReference type="HAMAP-Rule" id="MF_01217"/>
    </source>
</evidence>
<evidence type="ECO:0000255" key="2">
    <source>
        <dbReference type="PROSITE-ProRule" id="PRU00258"/>
    </source>
</evidence>
<protein>
    <recommendedName>
        <fullName evidence="1">Acyl carrier protein</fullName>
        <shortName evidence="1">ACP</shortName>
    </recommendedName>
</protein>
<name>ACP_DICNV</name>
<gene>
    <name evidence="1" type="primary">acpP</name>
    <name type="ordered locus">DNO_1210</name>
</gene>